<accession>Q9IH62</accession>
<accession>Q4KTA8</accession>
<accession>Q5K4D8</accession>
<gene>
    <name type="primary">G</name>
</gene>
<organismHost>
    <name type="scientific">Cynopterus brachyotis</name>
    <name type="common">Lesser short-nosed fruit bat</name>
    <name type="synonym">Pachysoma brachyotis</name>
    <dbReference type="NCBI Taxonomy" id="58060"/>
</organismHost>
<organismHost>
    <name type="scientific">Eonycteris spelaea</name>
    <name type="common">Lesser dawn bat</name>
    <name type="synonym">Macroglossus spelaeus</name>
    <dbReference type="NCBI Taxonomy" id="58065"/>
</organismHost>
<organismHost>
    <name type="scientific">Homo sapiens</name>
    <name type="common">Human</name>
    <dbReference type="NCBI Taxonomy" id="9606"/>
</organismHost>
<organismHost>
    <name type="scientific">Pteropus hypomelanus</name>
    <name type="common">Island flying fox</name>
    <name type="synonym">Variable flying fox</name>
    <dbReference type="NCBI Taxonomy" id="9405"/>
</organismHost>
<organismHost>
    <name type="scientific">Pteropus vampyrus</name>
    <name type="common">Large flying fox</name>
    <dbReference type="NCBI Taxonomy" id="132908"/>
</organismHost>
<organismHost>
    <name type="scientific">Scotophilus kuhlii</name>
    <name type="common">Lesser asiatic yellow bat</name>
    <dbReference type="NCBI Taxonomy" id="153297"/>
</organismHost>
<organismHost>
    <name type="scientific">Sus scrofa</name>
    <name type="common">Pig</name>
    <dbReference type="NCBI Taxonomy" id="9823"/>
</organismHost>
<keyword id="KW-0002">3D-structure</keyword>
<keyword id="KW-1165">Clathrin-mediated endocytosis of virus by host</keyword>
<keyword id="KW-1015">Disulfide bond</keyword>
<keyword id="KW-0325">Glycoprotein</keyword>
<keyword id="KW-0348">Hemagglutinin</keyword>
<keyword id="KW-1032">Host cell membrane</keyword>
<keyword id="KW-1043">Host membrane</keyword>
<keyword id="KW-0945">Host-virus interaction</keyword>
<keyword id="KW-0472">Membrane</keyword>
<keyword id="KW-0735">Signal-anchor</keyword>
<keyword id="KW-0812">Transmembrane</keyword>
<keyword id="KW-1133">Transmembrane helix</keyword>
<keyword id="KW-1161">Viral attachment to host cell</keyword>
<keyword id="KW-1234">Viral attachment to host entry receptor</keyword>
<keyword id="KW-0261">Viral envelope protein</keyword>
<keyword id="KW-1162">Viral penetration into host cytoplasm</keyword>
<keyword id="KW-0946">Virion</keyword>
<keyword id="KW-1164">Virus endocytosis by host</keyword>
<keyword id="KW-1160">Virus entry into host cell</keyword>
<comment type="function">
    <text evidence="2 5">Interacts with host ephrinB2/EFNB2 or ephrin B3/EFNB3 to provide virion attachment to target cell. This attachment induces virion internalization predominantly through clathrin-mediated endocytosis.</text>
</comment>
<comment type="subunit">
    <text evidence="3 4 6 7 8 9 11 12 13 14">Homotetramer; disulfide-linked (PubMed:35239409, PubMed:38582870, PubMed:38773072, PubMed:39134522). Interacts with host EFNB2; this interaction allows the virus entry into the host cell (PubMed:16007075, PubMed:18488039, PubMed:18815311). Interacts with host EFNB3; this interaction allows the virus entry into the host cell (PubMed:16477309, PubMed:18632560). Interacts with the fusion glycoprotein; this interaction involves both head and stalk regions of glygoprotein G (PubMed:27654290).</text>
</comment>
<comment type="interaction">
    <interactant intactId="EBI-15702710">
        <id>Q9IH62</id>
    </interactant>
    <interactant intactId="EBI-15702710">
        <id>Q9IH62</id>
        <label>G</label>
    </interactant>
    <organismsDiffer>false</organismsDiffer>
    <experiments>2</experiments>
</comment>
<comment type="interaction">
    <interactant intactId="EBI-15702710">
        <id>Q9IH62</id>
    </interactant>
    <interactant intactId="EBI-7532268">
        <id>P52799</id>
        <label>EFNB2</label>
    </interactant>
    <organismsDiffer>true</organismsDiffer>
    <experiments>5</experiments>
</comment>
<comment type="subcellular location">
    <subcellularLocation>
        <location evidence="15">Virion membrane</location>
        <topology evidence="15">Single-pass type II membrane protein</topology>
    </subcellularLocation>
    <subcellularLocation>
        <location evidence="15">Host cell membrane</location>
        <topology evidence="15">Single-pass type II membrane protein</topology>
    </subcellularLocation>
</comment>
<comment type="domain">
    <text evidence="11">The N-terminus four-helix bundle form the stalk and the C-terminus form the receptor binding globular head domain.</text>
</comment>
<comment type="PTM">
    <text evidence="8">N-glycosylated.</text>
</comment>
<comment type="similarity">
    <text evidence="15">Belongs to the paramyxoviruses hemagglutinin-neuraminidase family.</text>
</comment>
<comment type="caution">
    <text evidence="15">Henipavirus glycoproteins have no neuraminidase activity.</text>
</comment>
<sequence length="602" mass="67039">MPAENKKVRFENTTSDKGKIPSKVIKSYYGTMDIKKINEGLLDSKILSAFNTVIALLGSIVIIVMNIMIIQNYTRSTDNQAVIKDALQGIQQQIKGLADKIGTEIGPKVSLIDTSSTITIPANIGLLGSKISQSTASINENVNEKCKFTLPPLKIHECNISCPNPLPFREYRPQTEGVSNLVGLPNNICLQKTSNQILKPKLISYTLPVVGQSGTCITDPLLAMDEGYFAYSHLERIGSCSRGVSKQRIIGVGEVLDRGDEVPSLFMTNVWTPPNPNTVYHCSAVYNNEFYYVLCAVSTVGDPILNSTYWSGSLMMTRLAVKPKSNGGGYNQHQLALRSIEKGRYDKVMPYGPSGIKQGDTLYFPAVGFLVRTEFKYNDSNCPITKCQYSKPENCRLSMGIRPNSHYILRSGLLKYNLSDGENPKVVFIEISDQRLSIGSPSKIYDSLGQPVFYQASFSWDTMIKFGDVLTVNPLVVNWRNNTVISRPGQSQCPRFNTCPEICWEGVYNDAFLIDRINWISAGVFLDSNQTAENPVFTVFKDNEILYRAQLASEDTNAQKTITNCFLLKNKIWCISLVEIYDTGDNVIRPKLFAVKIPEQCT</sequence>
<organism>
    <name type="scientific">Nipah virus</name>
    <dbReference type="NCBI Taxonomy" id="3052225"/>
    <lineage>
        <taxon>Viruses</taxon>
        <taxon>Riboviria</taxon>
        <taxon>Orthornavirae</taxon>
        <taxon>Negarnaviricota</taxon>
        <taxon>Haploviricotina</taxon>
        <taxon>Monjiviricetes</taxon>
        <taxon>Mononegavirales</taxon>
        <taxon>Paramyxoviridae</taxon>
        <taxon>Orthoparamyxovirinae</taxon>
        <taxon>Henipavirus</taxon>
    </lineage>
</organism>
<dbReference type="EMBL" id="AF238467">
    <property type="protein sequence ID" value="AAF73957.1"/>
    <property type="molecule type" value="mRNA"/>
</dbReference>
<dbReference type="EMBL" id="AF212302">
    <property type="protein sequence ID" value="AAK29088.1"/>
    <property type="molecule type" value="Genomic_RNA"/>
</dbReference>
<dbReference type="EMBL" id="AY029767">
    <property type="protein sequence ID" value="AAK50545.1"/>
    <property type="molecule type" value="Genomic_RNA"/>
</dbReference>
<dbReference type="EMBL" id="AF376747">
    <property type="protein sequence ID" value="AAM13406.1"/>
    <property type="molecule type" value="Genomic_RNA"/>
</dbReference>
<dbReference type="EMBL" id="AY029768">
    <property type="protein sequence ID" value="AAK50554.1"/>
    <property type="molecule type" value="Genomic_RNA"/>
</dbReference>
<dbReference type="EMBL" id="AJ564621">
    <property type="protein sequence ID" value="CAD92351.1"/>
    <property type="molecule type" value="Genomic_RNA"/>
</dbReference>
<dbReference type="EMBL" id="AJ564622">
    <property type="protein sequence ID" value="CAD92357.1"/>
    <property type="molecule type" value="Genomic_RNA"/>
</dbReference>
<dbReference type="EMBL" id="AJ564623">
    <property type="protein sequence ID" value="CAD92363.1"/>
    <property type="molecule type" value="Genomic_RNA"/>
</dbReference>
<dbReference type="EMBL" id="AJ627196">
    <property type="protein sequence ID" value="CAF25497.1"/>
    <property type="molecule type" value="Genomic_RNA"/>
</dbReference>
<dbReference type="EMBL" id="AY858111">
    <property type="protein sequence ID" value="AAX51853.1"/>
    <property type="molecule type" value="Genomic_RNA"/>
</dbReference>
<dbReference type="RefSeq" id="NP_112027.1">
    <property type="nucleotide sequence ID" value="NC_002728.1"/>
</dbReference>
<dbReference type="PDB" id="2VSM">
    <property type="method" value="X-ray"/>
    <property type="resolution" value="1.80 A"/>
    <property type="chains" value="A=188-602"/>
</dbReference>
<dbReference type="PDB" id="2VWD">
    <property type="method" value="X-ray"/>
    <property type="resolution" value="2.25 A"/>
    <property type="chains" value="A/B=183-602"/>
</dbReference>
<dbReference type="PDB" id="3D11">
    <property type="method" value="X-ray"/>
    <property type="resolution" value="2.31 A"/>
    <property type="chains" value="A=176-602"/>
</dbReference>
<dbReference type="PDB" id="3D12">
    <property type="method" value="X-ray"/>
    <property type="resolution" value="3.00 A"/>
    <property type="chains" value="A/D=176-602"/>
</dbReference>
<dbReference type="PDB" id="6VY5">
    <property type="method" value="X-ray"/>
    <property type="resolution" value="3.40 A"/>
    <property type="chains" value="A=183-602"/>
</dbReference>
<dbReference type="PDB" id="7TXZ">
    <property type="method" value="EM"/>
    <property type="resolution" value="3.20 A"/>
    <property type="chains" value="A/B/C/D=70-601"/>
</dbReference>
<dbReference type="PDB" id="7TY0">
    <property type="method" value="EM"/>
    <property type="resolution" value="3.50 A"/>
    <property type="chains" value="A/B/C/D=70-601"/>
</dbReference>
<dbReference type="PDB" id="8JA5">
    <property type="method" value="X-ray"/>
    <property type="resolution" value="2.79 A"/>
    <property type="chains" value="A/D=186-602"/>
</dbReference>
<dbReference type="PDB" id="8K0D">
    <property type="method" value="EM"/>
    <property type="resolution" value="2.94 A"/>
    <property type="chains" value="A/B=200-601"/>
</dbReference>
<dbReference type="PDB" id="8K3C">
    <property type="method" value="EM"/>
    <property type="resolution" value="2.88 A"/>
    <property type="chains" value="A/B=131-601"/>
</dbReference>
<dbReference type="PDB" id="8XPY">
    <property type="method" value="EM"/>
    <property type="resolution" value="3.63 A"/>
    <property type="chains" value="A=1-602"/>
</dbReference>
<dbReference type="PDBsum" id="2VSM"/>
<dbReference type="PDBsum" id="2VWD"/>
<dbReference type="PDBsum" id="3D11"/>
<dbReference type="PDBsum" id="3D12"/>
<dbReference type="PDBsum" id="6VY5"/>
<dbReference type="PDBsum" id="7TXZ"/>
<dbReference type="PDBsum" id="7TY0"/>
<dbReference type="PDBsum" id="8JA5"/>
<dbReference type="PDBsum" id="8K0D"/>
<dbReference type="PDBsum" id="8K3C"/>
<dbReference type="PDBsum" id="8XPY"/>
<dbReference type="EMDB" id="EMD-26162"/>
<dbReference type="EMDB" id="EMD-26163"/>
<dbReference type="EMDB" id="EMD-36760"/>
<dbReference type="EMDB" id="EMD-36761"/>
<dbReference type="EMDB" id="EMD-36849"/>
<dbReference type="EMDB" id="EMD-38560"/>
<dbReference type="EMDB" id="EMD-38563"/>
<dbReference type="EMDB" id="EMD-38564"/>
<dbReference type="SMR" id="Q9IH62"/>
<dbReference type="DIP" id="DIP-46380N"/>
<dbReference type="IntAct" id="Q9IH62">
    <property type="interactions" value="10"/>
</dbReference>
<dbReference type="MINT" id="Q9IH62"/>
<dbReference type="BindingDB" id="Q9IH62"/>
<dbReference type="ChEMBL" id="CHEMBL6047"/>
<dbReference type="CAZy" id="GH83">
    <property type="family name" value="Glycoside Hydrolase Family 83"/>
</dbReference>
<dbReference type="GlyCosmos" id="Q9IH62">
    <property type="glycosylation" value="7 sites, No reported glycans"/>
</dbReference>
<dbReference type="ABCD" id="Q9IH62">
    <property type="antibodies" value="6 sequenced antibodies"/>
</dbReference>
<dbReference type="GeneID" id="920955"/>
<dbReference type="KEGG" id="vg:920955"/>
<dbReference type="OrthoDB" id="12739at10239"/>
<dbReference type="EvolutionaryTrace" id="Q9IH62"/>
<dbReference type="PRO" id="PR:Q9IH62"/>
<dbReference type="Proteomes" id="UP000002330">
    <property type="component" value="Segment"/>
</dbReference>
<dbReference type="Proteomes" id="UP000007527">
    <property type="component" value="Segment"/>
</dbReference>
<dbReference type="Proteomes" id="UP000008676">
    <property type="component" value="Segment"/>
</dbReference>
<dbReference type="Proteomes" id="UP000100567">
    <property type="component" value="Segment"/>
</dbReference>
<dbReference type="Proteomes" id="UP000110983">
    <property type="component" value="Segment"/>
</dbReference>
<dbReference type="Proteomes" id="UP000130871">
    <property type="component" value="Segment"/>
</dbReference>
<dbReference type="Proteomes" id="UP000170143">
    <property type="component" value="Segment"/>
</dbReference>
<dbReference type="GO" id="GO:0020002">
    <property type="term" value="C:host cell plasma membrane"/>
    <property type="evidence" value="ECO:0007669"/>
    <property type="project" value="UniProtKB-SubCell"/>
</dbReference>
<dbReference type="GO" id="GO:0016020">
    <property type="term" value="C:membrane"/>
    <property type="evidence" value="ECO:0007669"/>
    <property type="project" value="UniProtKB-KW"/>
</dbReference>
<dbReference type="GO" id="GO:0019031">
    <property type="term" value="C:viral envelope"/>
    <property type="evidence" value="ECO:0007669"/>
    <property type="project" value="UniProtKB-KW"/>
</dbReference>
<dbReference type="GO" id="GO:0055036">
    <property type="term" value="C:virion membrane"/>
    <property type="evidence" value="ECO:0007669"/>
    <property type="project" value="UniProtKB-SubCell"/>
</dbReference>
<dbReference type="GO" id="GO:0004308">
    <property type="term" value="F:exo-alpha-sialidase activity"/>
    <property type="evidence" value="ECO:0007669"/>
    <property type="project" value="InterPro"/>
</dbReference>
<dbReference type="GO" id="GO:0046789">
    <property type="term" value="F:host cell surface receptor binding"/>
    <property type="evidence" value="ECO:0007669"/>
    <property type="project" value="InterPro"/>
</dbReference>
<dbReference type="GO" id="GO:0042802">
    <property type="term" value="F:identical protein binding"/>
    <property type="evidence" value="ECO:0000353"/>
    <property type="project" value="IntAct"/>
</dbReference>
<dbReference type="GO" id="GO:0075512">
    <property type="term" value="P:clathrin-dependent endocytosis of virus by host cell"/>
    <property type="evidence" value="ECO:0007669"/>
    <property type="project" value="UniProtKB-KW"/>
</dbReference>
<dbReference type="GO" id="GO:0039663">
    <property type="term" value="P:membrane fusion involved in viral entry into host cell"/>
    <property type="evidence" value="ECO:0000314"/>
    <property type="project" value="CAFA"/>
</dbReference>
<dbReference type="GO" id="GO:0019062">
    <property type="term" value="P:virion attachment to host cell"/>
    <property type="evidence" value="ECO:0007669"/>
    <property type="project" value="UniProtKB-KW"/>
</dbReference>
<dbReference type="CDD" id="cd15468">
    <property type="entry name" value="HeV-G"/>
    <property type="match status" value="1"/>
</dbReference>
<dbReference type="FunFam" id="2.120.10.10:FF:000020">
    <property type="entry name" value="Glycoprotein G"/>
    <property type="match status" value="1"/>
</dbReference>
<dbReference type="Gene3D" id="2.120.10.10">
    <property type="match status" value="1"/>
</dbReference>
<dbReference type="InterPro" id="IPR016285">
    <property type="entry name" value="Hemagglutn-neuramid"/>
</dbReference>
<dbReference type="InterPro" id="IPR000665">
    <property type="entry name" value="Hemagglutn/HN"/>
</dbReference>
<dbReference type="InterPro" id="IPR036278">
    <property type="entry name" value="Sialidase_sf"/>
</dbReference>
<dbReference type="Pfam" id="PF00423">
    <property type="entry name" value="HN"/>
    <property type="match status" value="1"/>
</dbReference>
<dbReference type="PIRSF" id="PIRSF001072">
    <property type="entry name" value="Hemagglut-neuramid_paramyxoV"/>
    <property type="match status" value="1"/>
</dbReference>
<dbReference type="SUPFAM" id="SSF50939">
    <property type="entry name" value="Sialidases"/>
    <property type="match status" value="1"/>
</dbReference>
<feature type="chain" id="PRO_0000236009" description="Glycoprotein G">
    <location>
        <begin position="1"/>
        <end position="602"/>
    </location>
</feature>
<feature type="topological domain" description="Intravirion" evidence="1">
    <location>
        <begin position="1"/>
        <end position="49"/>
    </location>
</feature>
<feature type="transmembrane region" description="Helical" evidence="1">
    <location>
        <begin position="50"/>
        <end position="70"/>
    </location>
</feature>
<feature type="topological domain" description="Virion surface" evidence="1">
    <location>
        <begin position="71"/>
        <end position="602"/>
    </location>
</feature>
<feature type="region of interest" description="Stalk" evidence="11">
    <location>
        <begin position="96"/>
        <end position="163"/>
    </location>
</feature>
<feature type="region of interest" description="Head" evidence="11">
    <location>
        <begin position="177"/>
        <end position="602"/>
    </location>
</feature>
<feature type="glycosylation site" description="N-linked (GlcNAc...) asparagine; by host" evidence="1">
    <location>
        <position position="72"/>
    </location>
</feature>
<feature type="glycosylation site" description="N-linked (GlcNAc...) asparagine; by host" evidence="11">
    <location>
        <position position="159"/>
    </location>
</feature>
<feature type="glycosylation site" description="N-linked (GlcNAc...) asparagine; by host" evidence="8 10 17 20 22">
    <location>
        <position position="306"/>
    </location>
</feature>
<feature type="glycosylation site" description="N-linked (GlcNAc...) asparagine; by host" evidence="7 8 10 17 18 19 20">
    <location>
        <position position="378"/>
    </location>
</feature>
<feature type="glycosylation site" description="N-linked (GlcNAc...) asparagine; by host" evidence="6 8 10 16 17 20 22">
    <location>
        <position position="417"/>
    </location>
</feature>
<feature type="glycosylation site" description="N-linked (GlcNAc...) asparagine; by host" evidence="6 8 10 16 17 20">
    <location>
        <position position="481"/>
    </location>
</feature>
<feature type="glycosylation site" description="N-linked (GlcNAc...) asparagine; by host" evidence="6 8 10 16 17 20">
    <location>
        <position position="529"/>
    </location>
</feature>
<feature type="disulfide bond" description="Interchain" evidence="11 21">
    <location>
        <position position="146"/>
    </location>
</feature>
<feature type="disulfide bond" description="Interchain (with C-162)" evidence="11 21">
    <location>
        <position position="158"/>
    </location>
</feature>
<feature type="disulfide bond" description="Interchain (with C-158)" evidence="11 21">
    <location>
        <position position="162"/>
    </location>
</feature>
<feature type="disulfide bond" evidence="6 7 8 10 11 12 14 16 17 18 19 20 21 22 24 25">
    <location>
        <begin position="189"/>
        <end position="601"/>
    </location>
</feature>
<feature type="disulfide bond" evidence="6 7 8 11 12 13 14 16 17 18 19 21 22 23 24 25">
    <location>
        <begin position="216"/>
        <end position="240"/>
    </location>
</feature>
<feature type="disulfide bond" evidence="6 7 8 10 11 12 13 14 16 17 18 19 20 21 22 23 24 25">
    <location>
        <begin position="282"/>
        <end position="295"/>
    </location>
</feature>
<feature type="disulfide bond" evidence="6 7 8 10 11 12 13 14 16 17 18 19 20 21 22 23 24 25">
    <location>
        <begin position="382"/>
        <end position="395"/>
    </location>
</feature>
<feature type="disulfide bond" evidence="6 7 8 10 11 12 13 14 16 17 18 19 20 21 22 23 24 25">
    <location>
        <begin position="387"/>
        <end position="499"/>
    </location>
</feature>
<feature type="disulfide bond" evidence="6 7 8 10 11 12 13 14 16 17 18 19 20 21 22 23 24 25">
    <location>
        <begin position="493"/>
        <end position="503"/>
    </location>
</feature>
<feature type="disulfide bond" evidence="6 7 8 10 11 12 13 14 16 17 18 19 20 21 22 23 24 25">
    <location>
        <begin position="565"/>
        <end position="574"/>
    </location>
</feature>
<feature type="sequence variant" description="In strain: Isolate NiV/KHM/CSUR38.">
    <original>N</original>
    <variation>S</variation>
    <location>
        <position position="5"/>
    </location>
</feature>
<feature type="sequence variant" description="In strain: Isolate NiV/MY/99/VRI-0626.">
    <original>I</original>
    <variation>N</variation>
    <location>
        <position position="20"/>
    </location>
</feature>
<feature type="sequence variant" description="In strain: Isolate NiV/KHM/CSUR38.">
    <original>V</original>
    <variation>I</variation>
    <location>
        <position position="24"/>
    </location>
</feature>
<feature type="sequence variant" description="In strain: Isolate NiV/KHM/CSUR38.">
    <original>R</original>
    <variation>K</variation>
    <location>
        <position position="248"/>
    </location>
</feature>
<feature type="sequence variant" description="In strain: Isolate NiV/MY/99/VRI-0626.">
    <original>T</original>
    <variation>A</variation>
    <location>
        <position position="272"/>
    </location>
</feature>
<feature type="sequence variant" description="In strain: Isolate NiV/KHM/CSUR38.">
    <original>G</original>
    <variation>D</variation>
    <location>
        <position position="327"/>
    </location>
</feature>
<feature type="sequence variant" description="In strain: Isolate NiV/KHM/CSUR38.">
    <original>I</original>
    <variation>V</variation>
    <location>
        <position position="408"/>
    </location>
</feature>
<feature type="sequence variant" description="In strain: Isolate NiV/KHM/CSUR38.">
    <original>V</original>
    <variation>I</variation>
    <location>
        <position position="426"/>
    </location>
</feature>
<feature type="sequence variant" description="In strain: Isolate NiV/KHM/CSUR38.">
    <original>L</original>
    <variation>Q</variation>
    <location>
        <position position="470"/>
    </location>
</feature>
<feature type="sequence variant" description="In strain: Isolate NiV/KHM/CSUR38.">
    <original>N</original>
    <variation>S</variation>
    <location>
        <position position="478"/>
    </location>
</feature>
<feature type="sequence variant" description="In strain: Isolate NiV/KHM/CSUR38.">
    <original>N</original>
    <variation>D</variation>
    <location>
        <position position="481"/>
    </location>
</feature>
<feature type="helix" evidence="32">
    <location>
        <begin position="97"/>
        <end position="103"/>
    </location>
</feature>
<feature type="helix" evidence="32">
    <location>
        <begin position="106"/>
        <end position="117"/>
    </location>
</feature>
<feature type="helix" evidence="33">
    <location>
        <begin position="133"/>
        <end position="145"/>
    </location>
</feature>
<feature type="helix" evidence="31">
    <location>
        <begin position="155"/>
        <end position="157"/>
    </location>
</feature>
<feature type="strand" evidence="31">
    <location>
        <begin position="158"/>
        <end position="161"/>
    </location>
</feature>
<feature type="strand" evidence="29">
    <location>
        <begin position="178"/>
        <end position="180"/>
    </location>
</feature>
<feature type="strand" evidence="26">
    <location>
        <begin position="201"/>
        <end position="203"/>
    </location>
</feature>
<feature type="helix" evidence="28">
    <location>
        <begin position="204"/>
        <end position="206"/>
    </location>
</feature>
<feature type="turn" evidence="27">
    <location>
        <begin position="208"/>
        <end position="211"/>
    </location>
</feature>
<feature type="strand" evidence="26">
    <location>
        <begin position="215"/>
        <end position="225"/>
    </location>
</feature>
<feature type="strand" evidence="26">
    <location>
        <begin position="228"/>
        <end position="238"/>
    </location>
</feature>
<feature type="turn" evidence="26">
    <location>
        <begin position="240"/>
        <end position="242"/>
    </location>
</feature>
<feature type="strand" evidence="26">
    <location>
        <begin position="243"/>
        <end position="257"/>
    </location>
</feature>
<feature type="strand" evidence="26">
    <location>
        <begin position="259"/>
        <end position="261"/>
    </location>
</feature>
<feature type="strand" evidence="26">
    <location>
        <begin position="263"/>
        <end position="271"/>
    </location>
</feature>
<feature type="strand" evidence="26">
    <location>
        <begin position="278"/>
        <end position="287"/>
    </location>
</feature>
<feature type="strand" evidence="26">
    <location>
        <begin position="290"/>
        <end position="297"/>
    </location>
</feature>
<feature type="strand" evidence="26">
    <location>
        <begin position="299"/>
        <end position="301"/>
    </location>
</feature>
<feature type="turn" evidence="26">
    <location>
        <begin position="303"/>
        <end position="305"/>
    </location>
</feature>
<feature type="turn" evidence="26">
    <location>
        <begin position="307"/>
        <end position="309"/>
    </location>
</feature>
<feature type="strand" evidence="26">
    <location>
        <begin position="314"/>
        <end position="322"/>
    </location>
</feature>
<feature type="helix" evidence="26">
    <location>
        <begin position="328"/>
        <end position="331"/>
    </location>
</feature>
<feature type="strand" evidence="26">
    <location>
        <begin position="332"/>
        <end position="336"/>
    </location>
</feature>
<feature type="strand" evidence="26">
    <location>
        <begin position="346"/>
        <end position="350"/>
    </location>
</feature>
<feature type="strand" evidence="26">
    <location>
        <begin position="352"/>
        <end position="354"/>
    </location>
</feature>
<feature type="strand" evidence="26">
    <location>
        <begin position="356"/>
        <end position="358"/>
    </location>
</feature>
<feature type="strand" evidence="26">
    <location>
        <begin position="361"/>
        <end position="371"/>
    </location>
</feature>
<feature type="helix" evidence="26">
    <location>
        <begin position="372"/>
        <end position="374"/>
    </location>
</feature>
<feature type="helix" evidence="26">
    <location>
        <begin position="379"/>
        <end position="381"/>
    </location>
</feature>
<feature type="helix" evidence="26">
    <location>
        <begin position="394"/>
        <end position="397"/>
    </location>
</feature>
<feature type="strand" evidence="26">
    <location>
        <begin position="400"/>
        <end position="402"/>
    </location>
</feature>
<feature type="strand" evidence="26">
    <location>
        <begin position="406"/>
        <end position="417"/>
    </location>
</feature>
<feature type="helix" evidence="26">
    <location>
        <begin position="418"/>
        <end position="420"/>
    </location>
</feature>
<feature type="strand" evidence="26">
    <location>
        <begin position="426"/>
        <end position="431"/>
    </location>
</feature>
<feature type="strand" evidence="33">
    <location>
        <begin position="433"/>
        <end position="435"/>
    </location>
</feature>
<feature type="strand" evidence="26">
    <location>
        <begin position="442"/>
        <end position="447"/>
    </location>
</feature>
<feature type="strand" evidence="26">
    <location>
        <begin position="450"/>
        <end position="455"/>
    </location>
</feature>
<feature type="strand" evidence="26">
    <location>
        <begin position="465"/>
        <end position="471"/>
    </location>
</feature>
<feature type="turn" evidence="26">
    <location>
        <begin position="472"/>
        <end position="474"/>
    </location>
</feature>
<feature type="strand" evidence="26">
    <location>
        <begin position="475"/>
        <end position="479"/>
    </location>
</feature>
<feature type="strand" evidence="26">
    <location>
        <begin position="491"/>
        <end position="493"/>
    </location>
</feature>
<feature type="strand" evidence="26">
    <location>
        <begin position="511"/>
        <end position="515"/>
    </location>
</feature>
<feature type="turn" evidence="26">
    <location>
        <begin position="516"/>
        <end position="519"/>
    </location>
</feature>
<feature type="strand" evidence="26">
    <location>
        <begin position="520"/>
        <end position="526"/>
    </location>
</feature>
<feature type="strand" evidence="26">
    <location>
        <begin position="529"/>
        <end position="533"/>
    </location>
</feature>
<feature type="strand" evidence="26">
    <location>
        <begin position="535"/>
        <end position="541"/>
    </location>
</feature>
<feature type="strand" evidence="26">
    <location>
        <begin position="544"/>
        <end position="550"/>
    </location>
</feature>
<feature type="strand" evidence="26">
    <location>
        <begin position="557"/>
        <end position="568"/>
    </location>
</feature>
<feature type="strand" evidence="26">
    <location>
        <begin position="571"/>
        <end position="581"/>
    </location>
</feature>
<feature type="turn" evidence="30">
    <location>
        <begin position="583"/>
        <end position="585"/>
    </location>
</feature>
<feature type="strand" evidence="26">
    <location>
        <begin position="586"/>
        <end position="588"/>
    </location>
</feature>
<feature type="strand" evidence="26">
    <location>
        <begin position="591"/>
        <end position="596"/>
    </location>
</feature>
<feature type="strand" evidence="28">
    <location>
        <begin position="599"/>
        <end position="601"/>
    </location>
</feature>
<evidence type="ECO:0000255" key="1"/>
<evidence type="ECO:0000269" key="2">
    <source>
    </source>
</evidence>
<evidence type="ECO:0000269" key="3">
    <source>
    </source>
</evidence>
<evidence type="ECO:0000269" key="4">
    <source>
    </source>
</evidence>
<evidence type="ECO:0000269" key="5">
    <source>
    </source>
</evidence>
<evidence type="ECO:0000269" key="6">
    <source>
    </source>
</evidence>
<evidence type="ECO:0000269" key="7">
    <source>
    </source>
</evidence>
<evidence type="ECO:0000269" key="8">
    <source>
    </source>
</evidence>
<evidence type="ECO:0000269" key="9">
    <source>
    </source>
</evidence>
<evidence type="ECO:0000269" key="10">
    <source>
    </source>
</evidence>
<evidence type="ECO:0000269" key="11">
    <source>
    </source>
</evidence>
<evidence type="ECO:0000269" key="12">
    <source>
    </source>
</evidence>
<evidence type="ECO:0000269" key="13">
    <source>
    </source>
</evidence>
<evidence type="ECO:0000269" key="14">
    <source>
    </source>
</evidence>
<evidence type="ECO:0000305" key="15"/>
<evidence type="ECO:0007744" key="16">
    <source>
        <dbReference type="PDB" id="2VSM"/>
    </source>
</evidence>
<evidence type="ECO:0007744" key="17">
    <source>
        <dbReference type="PDB" id="2VWD"/>
    </source>
</evidence>
<evidence type="ECO:0007744" key="18">
    <source>
        <dbReference type="PDB" id="3D11"/>
    </source>
</evidence>
<evidence type="ECO:0007744" key="19">
    <source>
        <dbReference type="PDB" id="3D12"/>
    </source>
</evidence>
<evidence type="ECO:0007744" key="20">
    <source>
        <dbReference type="PDB" id="6VY5"/>
    </source>
</evidence>
<evidence type="ECO:0007744" key="21">
    <source>
        <dbReference type="PDB" id="7TY0"/>
    </source>
</evidence>
<evidence type="ECO:0007744" key="22">
    <source>
        <dbReference type="PDB" id="8JA5"/>
    </source>
</evidence>
<evidence type="ECO:0007744" key="23">
    <source>
        <dbReference type="PDB" id="8K0D"/>
    </source>
</evidence>
<evidence type="ECO:0007744" key="24">
    <source>
        <dbReference type="PDB" id="8K3C"/>
    </source>
</evidence>
<evidence type="ECO:0007744" key="25">
    <source>
        <dbReference type="PDB" id="8XPY"/>
    </source>
</evidence>
<evidence type="ECO:0007829" key="26">
    <source>
        <dbReference type="PDB" id="2VSM"/>
    </source>
</evidence>
<evidence type="ECO:0007829" key="27">
    <source>
        <dbReference type="PDB" id="2VWD"/>
    </source>
</evidence>
<evidence type="ECO:0007829" key="28">
    <source>
        <dbReference type="PDB" id="3D11"/>
    </source>
</evidence>
<evidence type="ECO:0007829" key="29">
    <source>
        <dbReference type="PDB" id="3D12"/>
    </source>
</evidence>
<evidence type="ECO:0007829" key="30">
    <source>
        <dbReference type="PDB" id="6VY5"/>
    </source>
</evidence>
<evidence type="ECO:0007829" key="31">
    <source>
        <dbReference type="PDB" id="7TXZ"/>
    </source>
</evidence>
<evidence type="ECO:0007829" key="32">
    <source>
        <dbReference type="PDB" id="7TY0"/>
    </source>
</evidence>
<evidence type="ECO:0007829" key="33">
    <source>
        <dbReference type="PDB" id="8K3C"/>
    </source>
</evidence>
<proteinExistence type="evidence at protein level"/>
<protein>
    <recommendedName>
        <fullName>Glycoprotein G</fullName>
    </recommendedName>
</protein>
<name>GLYCP_NIPAV</name>
<reference key="1">
    <citation type="journal article" date="2000" name="Virology">
        <title>Molecular characterization of Nipah virus, a newly emergent paramyxovirus.</title>
        <authorList>
            <person name="Harcourt B.H."/>
            <person name="Tamin A."/>
            <person name="Rollin P.E."/>
            <person name="Ksiazek T.G."/>
            <person name="Anderson L.J."/>
            <person name="Bellini W.J."/>
            <person name="Rota P.A."/>
        </authorList>
    </citation>
    <scope>NUCLEOTIDE SEQUENCE [MRNA]</scope>
</reference>
<reference key="2">
    <citation type="journal article" date="2000" name="Science">
        <title>Nipah virus: a recently emergent deadly paramyxovirus.</title>
        <authorList>
            <person name="Chua K.B."/>
            <person name="Bellini W.J."/>
            <person name="Rota P.A."/>
            <person name="Harcourt B.H."/>
            <person name="Tamin A."/>
            <person name="Lam S.K."/>
            <person name="Ksiazek T.G."/>
            <person name="Rollin P.E."/>
            <person name="Zaki S.R."/>
            <person name="Shieh W."/>
            <person name="Goldsmith C.S."/>
            <person name="Gubler D.J."/>
            <person name="Roehrig J.T."/>
            <person name="Eaton B."/>
            <person name="Gould A.R."/>
            <person name="Olson J."/>
            <person name="Field H."/>
            <person name="Daniels P."/>
            <person name="Ling A.E."/>
            <person name="Peters C.J."/>
            <person name="Anderson L.J."/>
            <person name="Mahy B.W."/>
        </authorList>
    </citation>
    <scope>NUCLEOTIDE SEQUENCE [GENOMIC RNA]</scope>
</reference>
<reference key="3">
    <citation type="journal article" date="2001" name="J. Gen. Virol.">
        <title>Complete nucleotide sequences of Nipah virus isolates from Malaysia.</title>
        <authorList>
            <person name="Chan Y.P."/>
            <person name="Chua K.B."/>
            <person name="Koh C.L."/>
            <person name="Lim M.E."/>
            <person name="Lam S.K."/>
        </authorList>
    </citation>
    <scope>NUCLEOTIDE SEQUENCE [GENOMIC RNA]</scope>
    <source>
        <strain>Isolate UMMC1</strain>
        <strain>Isolate UMMC2</strain>
    </source>
</reference>
<reference key="4">
    <citation type="journal article" date="2002" name="Microbes Infect.">
        <title>Isolation of Nipah virus from Malaysian island flying-foxes.</title>
        <authorList>
            <person name="Chua K.B."/>
            <person name="Koh C.L."/>
            <person name="Hooi P.S."/>
            <person name="Wee K.F."/>
            <person name="Khong J.H."/>
            <person name="Chua B.H."/>
            <person name="Chan Y.P."/>
            <person name="Lim M.E."/>
            <person name="Lam S.K."/>
        </authorList>
    </citation>
    <scope>NUCLEOTIDE SEQUENCE [GENOMIC RNA]</scope>
    <source>
        <strain>Isolate Malaysian flying-fox</strain>
    </source>
</reference>
<reference key="5">
    <citation type="journal article" date="2004" name="Emerg. Infect. Dis.">
        <title>Isolation and molecular identification of Nipah virus from pigs.</title>
        <authorList>
            <person name="Abubakar S."/>
            <person name="Chang L.Y."/>
            <person name="Mohdali A.R."/>
            <person name="Sharifah S.H."/>
            <person name="Yusoff K."/>
            <person name="Zamrod Z."/>
        </authorList>
    </citation>
    <scope>NUCLEOTIDE SEQUENCE [GENOMIC RNA]</scope>
    <source>
        <strain>Isolate NiV/MY/99/UM-0128</strain>
        <strain>Isolate NiV/MY/99/VRI-1413</strain>
        <strain>Isolate NiV/MY/99/VRI-2794</strain>
    </source>
</reference>
<reference key="6">
    <citation type="journal article" date="2005" name="Emerg. Infect. Dis.">
        <title>Nipah virus in Lyle's flying foxes, Cambodia.</title>
        <authorList>
            <person name="Reynes J.-M."/>
            <person name="Counor D."/>
            <person name="Ong S."/>
            <person name="Faure C."/>
            <person name="Seng V."/>
            <person name="Molia S."/>
            <person name="Walston J."/>
            <person name="Georges-Courbot M."/>
            <person name="Deubel V."/>
            <person name="Sarthou J.-L."/>
        </authorList>
    </citation>
    <scope>NUCLEOTIDE SEQUENCE [GENOMIC RNA]</scope>
    <source>
        <strain>Isolate NiV/KHM/CSUR381</strain>
    </source>
</reference>
<reference key="7">
    <citation type="journal article" date="2005" name="Nature">
        <title>EphrinB2 is the entry receptor for Nipah virus, an emergent deadly paramyxovirus.</title>
        <authorList>
            <person name="Negrete O.A."/>
            <person name="Levroney E.L."/>
            <person name="Aguilar H.C."/>
            <person name="Bertolotti-Ciarlet A."/>
            <person name="Nazarian R."/>
            <person name="Tajyar S."/>
            <person name="Lee B."/>
        </authorList>
    </citation>
    <scope>INTERACTION WITH HOST EFNB2</scope>
</reference>
<reference key="8">
    <citation type="journal article" date="2006" name="PLoS Pathog.">
        <title>Two key residues in ephrinB3 are critical for its use as an alternative receptor for Nipah virus.</title>
        <authorList>
            <person name="Negrete O.A."/>
            <person name="Wolf M.C."/>
            <person name="Aguilar H.C."/>
            <person name="Enterlein S."/>
            <person name="Wang W."/>
            <person name="Muehlberger E."/>
            <person name="Su S.V."/>
            <person name="Bertolotti-Ciarlet A."/>
            <person name="Flick R."/>
            <person name="Lee B."/>
        </authorList>
    </citation>
    <scope>INTERACTION WITH HOST EFNB3</scope>
</reference>
<reference key="9">
    <citation type="journal article" date="2007" name="Ann. N. Y. Acad. Sci.">
        <title>Molecular characteristics of the Nipah virus glycoproteins.</title>
        <authorList>
            <person name="Diederich S."/>
            <person name="Maisner A."/>
        </authorList>
    </citation>
    <scope>FUNCTION</scope>
</reference>
<reference key="10">
    <citation type="journal article" date="2005" name="J. Biol. Chem.">
        <title>The nipah virus fusion protein is cleaved within the endosomal compartment.</title>
        <authorList>
            <person name="Diederich S."/>
            <person name="Moll M."/>
            <person name="Klenk H.D."/>
            <person name="Maisner A."/>
        </authorList>
    </citation>
    <scope>FUNCTION</scope>
</reference>
<reference key="11">
    <citation type="journal article" date="2016" name="J. Virol.">
        <title>Multiple Strategies Reveal a Bidentate Interaction between the Nipah Virus Attachment and Fusion Glycoproteins.</title>
        <authorList>
            <person name="Stone J.A."/>
            <person name="Vemulapati B.M."/>
            <person name="Bradel-Tretheway B."/>
            <person name="Aguilar H.C."/>
        </authorList>
    </citation>
    <scope>INTERACTION WITH THE FUSION GLYCOPROTEIN</scope>
</reference>
<reference evidence="17" key="12">
    <citation type="journal article" date="2008" name="J. Virol.">
        <title>Crystal structure and carbohydrate analysis of Nipah virus attachment glycoprotein: a template for antiviral and vaccine design.</title>
        <authorList>
            <person name="Bowden T.A."/>
            <person name="Crispin M."/>
            <person name="Harvey D.J."/>
            <person name="Aricescu A.R."/>
            <person name="Grimes J.M."/>
            <person name="Jones E.Y."/>
            <person name="Stuart D.I."/>
        </authorList>
    </citation>
    <scope>X-RAY CRYSTALLOGRAPHY (2.25 ANGSTROMS) OF 183-602 IN COMPLEX WITH EFNB2</scope>
    <scope>GLYCOSYLATION AT ASN-306; ASN-378; ASN-417; ASN-481 AND ASN-529</scope>
    <scope>DISULFIDE BONDS</scope>
    <scope>INTERACTION WITH HOST EFNB2</scope>
</reference>
<reference evidence="16" key="13">
    <citation type="journal article" date="2008" name="Nat. Struct. Mol. Biol.">
        <title>Structural basis of Nipah and Hendra virus attachment to their cell-surface receptor ephrin-B2.</title>
        <authorList>
            <person name="Bowden T.A."/>
            <person name="Aricescu A.R."/>
            <person name="Gilbert R.J."/>
            <person name="Grimes J.M."/>
            <person name="Jones E.Y."/>
            <person name="Stuart D.I."/>
        </authorList>
    </citation>
    <scope>X-RAY CRYSTALLOGRAPHY (1.80 ANGSTROMS) OF 188-602 IN COMPLEX WITH HUMAN EFNB2</scope>
    <scope>GLYCOSYLATION AT ASN-417; ASN-481 AND ASN-529</scope>
    <scope>DISULFIDE BONDS</scope>
</reference>
<reference evidence="18 19" key="14">
    <citation type="journal article" date="2008" name="Proc. Natl. Acad. Sci. U.S.A.">
        <title>Host cell recognition by the henipaviruses: crystal structures of the Nipah G attachment glycoprotein and its complex with ephrin-B3.</title>
        <authorList>
            <person name="Xu K."/>
            <person name="Rajashankar K.R."/>
            <person name="Chan Y.P."/>
            <person name="Himanen J.P."/>
            <person name="Broder C.C."/>
            <person name="Nikolov D.B."/>
        </authorList>
    </citation>
    <scope>X-RAY CRYSTALLOGRAPHY (2.31 ANGSTROMS) OF 176-602 IN COMPLEX WITH HUMAN EFNB3</scope>
    <scope>GLYCOSYLATION AT ASN-378</scope>
    <scope>DISULFIDE BONDS</scope>
</reference>
<reference evidence="20" key="15">
    <citation type="journal article" date="2020" name="Cell">
        <title>Potent Henipavirus Neutralization by Antibodies Recognizing Diverse Sites on Hendra and Nipah Virus Receptor Binding Protein.</title>
        <authorList>
            <person name="Dong J."/>
            <person name="Cross R.W."/>
            <person name="Doyle M.P."/>
            <person name="Kose N."/>
            <person name="Mousa J.J."/>
            <person name="Annand E.J."/>
            <person name="Borisevich V."/>
            <person name="Agans K.N."/>
            <person name="Sutton R."/>
            <person name="Nargi R."/>
            <person name="Majedi M."/>
            <person name="Fenton K.A."/>
            <person name="Reichard W."/>
            <person name="Bombardi R.G."/>
            <person name="Geisbert T.W."/>
            <person name="Crowe J.E."/>
        </authorList>
    </citation>
    <scope>X-RAY CRYSTALLOGRAPHY (3.40 ANGSTROMS) OF 183-602 IN COMPLEX WITH HUMAN NEUTRALIZING ANTIBODY HENV-26</scope>
    <scope>GLYCOSYLATION AT ASN-306; ASN-378; ASN-417; ASN-481 AND ASN-529</scope>
    <scope>DISULFIDE BONDS</scope>
</reference>
<reference evidence="21" key="16">
    <citation type="journal article" date="2022" name="Science">
        <title>Architecture and antigenicity of the Nipah virus attachment glycoprotein.</title>
        <authorList>
            <person name="Wang Z."/>
            <person name="Amaya M."/>
            <person name="Addetia A."/>
            <person name="Dang H.V."/>
            <person name="Reggiano G."/>
            <person name="Yan L."/>
            <person name="Hickey A.C."/>
            <person name="DiMaio F."/>
            <person name="Broder C.C."/>
            <person name="Veesler D."/>
        </authorList>
    </citation>
    <scope>STRUCTURE BY ELECTRON MICROSCOPY (3.50 ANGSTROMS) OF 70-601 IN COMPLEX WITH NAH1.3 NEUTRALIZING ANTIBODY</scope>
    <scope>DISULFIDE BONDS</scope>
    <scope>SUBUNIT</scope>
    <scope>DOMAIN</scope>
    <scope>GLYCOSYLATION AT ASN-159</scope>
</reference>
<reference evidence="24" key="17">
    <citation type="journal article" date="2024" name="Nat. Commun.">
        <title>Potent human neutralizing antibodies against Nipah virus derived from two ancestral antibody heavy chains.</title>
        <authorList>
            <person name="Chen L."/>
            <person name="Sun M."/>
            <person name="Zhang H."/>
            <person name="Zhang X."/>
            <person name="Yao Y."/>
            <person name="Li M."/>
            <person name="Li K."/>
            <person name="Fan P."/>
            <person name="Zhang H."/>
            <person name="Qin Y."/>
            <person name="Zhang Z."/>
            <person name="Li E."/>
            <person name="Chen Z."/>
            <person name="Guan W."/>
            <person name="Li S."/>
            <person name="Yu C."/>
            <person name="Zhang K."/>
            <person name="Gong R."/>
            <person name="Chiu S."/>
        </authorList>
    </citation>
    <scope>STRUCTURE BY ELECTRON MICROSCOPY (2.88 ANGSTROMS) OF 131-601 IN COMPLEX WITH ANTIBODY NIV41-46</scope>
    <scope>DISULFIDE BONDS</scope>
    <scope>SUBUNIT</scope>
</reference>
<reference evidence="23" key="18">
    <citation type="journal article" date="2024" name="Nat. Commun.">
        <title>A potent Henipavirus cross-neutralizing antibody reveals a dynamic fusion-triggering pattern of the G-tetramer.</title>
        <authorList>
            <person name="Fan P."/>
            <person name="Sun M."/>
            <person name="Zhang X."/>
            <person name="Zhang H."/>
            <person name="Liu Y."/>
            <person name="Yao Y."/>
            <person name="Li M."/>
            <person name="Fang T."/>
            <person name="Sun B."/>
            <person name="Chen Z."/>
            <person name="Chi X."/>
            <person name="Chen L."/>
            <person name="Peng C."/>
            <person name="Chen Z."/>
            <person name="Zhang G."/>
            <person name="Ren Y."/>
            <person name="Liu Z."/>
            <person name="Li Y."/>
            <person name="Li J."/>
            <person name="Li E."/>
            <person name="Guan W."/>
            <person name="Li S."/>
            <person name="Gong R."/>
            <person name="Zhang K."/>
            <person name="Yu C."/>
            <person name="Chiu S."/>
        </authorList>
    </citation>
    <scope>STRUCTURE BY ELECTRON MICROSCOPY (2.94 ANGSTROMS) OF 200-601 IN COMPLEX WITH NEUTRALIZING ANTIBODY 1E5</scope>
    <scope>DISULFIDE BONDS</scope>
    <scope>SUBUNIT</scope>
</reference>
<reference evidence="25" key="19">
    <citation type="journal article" date="2024" name="Nat. Commun.">
        <title>Fully human single-domain antibody targeting a highly conserved cryptic epitope on the Nipah virus G protein.</title>
        <authorList>
            <person name="Wang Y."/>
            <person name="Sun Y."/>
            <person name="Shen Z."/>
            <person name="Wang C."/>
            <person name="Qian J."/>
            <person name="Mao Q."/>
            <person name="Wang Y."/>
            <person name="Song W."/>
            <person name="Kong Y."/>
            <person name="Zhan C."/>
            <person name="Chen Z."/>
            <person name="Dimitrov D.S."/>
            <person name="Yang Z."/>
            <person name="Jiang S."/>
            <person name="Wu F."/>
            <person name="Lu L."/>
            <person name="Ying T."/>
            <person name="Sun L."/>
            <person name="Wu Y."/>
        </authorList>
    </citation>
    <scope>STRUCTURE BY ELECTRON MICROSCOPY (3.63 ANGSTROMS)</scope>
    <scope>DISULFIDE BONDS</scope>
    <scope>SUBUNIT</scope>
</reference>